<comment type="function">
    <text evidence="6 7 8">Essential component for DNA replication and also the checkpoint control system which couples S and M phases. May directly or indirectly interact with chromatin proteins to form the complex required for the initiation and/or progression of DNA synthesis (PubMed:7957098, PubMed:8343962). Interacts simultaneously with both 'Thr-187' phosphorylation sites in a crb2 dimer for establishing the DNA checkpoint (PubMed:24074952).</text>
</comment>
<comment type="subunit">
    <text evidence="3 4 6 9">Interacts with drc1/sld2 (PubMed:11937031). Interacts (via BRCT1,2 domains) with crb2 (PubMed:9407031, PubMed:14739927); a single rad4 molecule interacts simultaneously with both 'Thr-187' phosphorylation sites in a crb2 dimer (PubMed:24074952).</text>
</comment>
<comment type="interaction">
    <interactant intactId="EBI-768521">
        <id>P32372</id>
    </interactant>
    <interactant intactId="EBI-768448">
        <id>P87074</id>
        <label>crb2</label>
    </interactant>
    <organismsDiffer>false</organismsDiffer>
    <experiments>2</experiments>
</comment>
<comment type="subcellular location">
    <subcellularLocation>
        <location>Nucleus</location>
    </subcellularLocation>
</comment>
<proteinExistence type="evidence at protein level"/>
<protein>
    <recommendedName>
        <fullName>S-M checkpoint control protein rad4</fullName>
    </recommendedName>
    <alternativeName>
        <fullName>P74</fullName>
    </alternativeName>
    <alternativeName>
        <fullName>Protein cut5</fullName>
    </alternativeName>
</protein>
<dbReference type="EMBL" id="D16627">
    <property type="protein sequence ID" value="BAA04048.1"/>
    <property type="molecule type" value="Genomic_DNA"/>
</dbReference>
<dbReference type="EMBL" id="CU329670">
    <property type="protein sequence ID" value="CAB16889.1"/>
    <property type="molecule type" value="Genomic_DNA"/>
</dbReference>
<dbReference type="EMBL" id="X62676">
    <property type="protein sequence ID" value="CAA44548.1"/>
    <property type="molecule type" value="Genomic_DNA"/>
</dbReference>
<dbReference type="PIR" id="B40727">
    <property type="entry name" value="B40727"/>
</dbReference>
<dbReference type="RefSeq" id="NP_593190.1">
    <property type="nucleotide sequence ID" value="NM_001018586.2"/>
</dbReference>
<dbReference type="PDB" id="4BMC">
    <property type="method" value="X-ray"/>
    <property type="resolution" value="1.98 A"/>
    <property type="chains" value="A=1-186"/>
</dbReference>
<dbReference type="PDB" id="4BMD">
    <property type="method" value="X-ray"/>
    <property type="resolution" value="2.50 A"/>
    <property type="chains" value="A=291-494"/>
</dbReference>
<dbReference type="PDB" id="4BU0">
    <property type="method" value="X-ray"/>
    <property type="resolution" value="1.50 A"/>
    <property type="chains" value="A=1-186"/>
</dbReference>
<dbReference type="PDB" id="4BU1">
    <property type="method" value="X-ray"/>
    <property type="resolution" value="2.10 A"/>
    <property type="chains" value="A/B=1-186"/>
</dbReference>
<dbReference type="PDB" id="6HM3">
    <property type="method" value="X-ray"/>
    <property type="resolution" value="1.77 A"/>
    <property type="chains" value="A=1-186"/>
</dbReference>
<dbReference type="PDB" id="6HM4">
    <property type="method" value="X-ray"/>
    <property type="resolution" value="1.77 A"/>
    <property type="chains" value="A=1-186"/>
</dbReference>
<dbReference type="PDBsum" id="4BMC"/>
<dbReference type="PDBsum" id="4BMD"/>
<dbReference type="PDBsum" id="4BU0"/>
<dbReference type="PDBsum" id="4BU1"/>
<dbReference type="PDBsum" id="6HM3"/>
<dbReference type="PDBsum" id="6HM4"/>
<dbReference type="SMR" id="P32372"/>
<dbReference type="BioGRID" id="279708">
    <property type="interactions" value="38"/>
</dbReference>
<dbReference type="FunCoup" id="P32372">
    <property type="interactions" value="29"/>
</dbReference>
<dbReference type="IntAct" id="P32372">
    <property type="interactions" value="3"/>
</dbReference>
<dbReference type="MINT" id="P32372"/>
<dbReference type="STRING" id="284812.P32372"/>
<dbReference type="iPTMnet" id="P32372"/>
<dbReference type="PaxDb" id="4896-SPAC23C4.18c.1"/>
<dbReference type="EnsemblFungi" id="SPAC23C4.18c.1">
    <property type="protein sequence ID" value="SPAC23C4.18c.1:pep"/>
    <property type="gene ID" value="SPAC23C4.18c"/>
</dbReference>
<dbReference type="GeneID" id="2543281"/>
<dbReference type="KEGG" id="spo:2543281"/>
<dbReference type="PomBase" id="SPAC23C4.18c">
    <property type="gene designation" value="rad4"/>
</dbReference>
<dbReference type="VEuPathDB" id="FungiDB:SPAC23C4.18c"/>
<dbReference type="eggNOG" id="KOG1929">
    <property type="taxonomic scope" value="Eukaryota"/>
</dbReference>
<dbReference type="HOGENOM" id="CLU_422818_0_0_1"/>
<dbReference type="InParanoid" id="P32372"/>
<dbReference type="OMA" id="PKYKFAA"/>
<dbReference type="PhylomeDB" id="P32372"/>
<dbReference type="EvolutionaryTrace" id="P32372"/>
<dbReference type="PRO" id="PR:P32372"/>
<dbReference type="Proteomes" id="UP000002485">
    <property type="component" value="Chromosome I"/>
</dbReference>
<dbReference type="GO" id="GO:0000785">
    <property type="term" value="C:chromatin"/>
    <property type="evidence" value="ECO:0000314"/>
    <property type="project" value="PomBase"/>
</dbReference>
<dbReference type="GO" id="GO:0005829">
    <property type="term" value="C:cytosol"/>
    <property type="evidence" value="ECO:0000314"/>
    <property type="project" value="PomBase"/>
</dbReference>
<dbReference type="GO" id="GO:0031261">
    <property type="term" value="C:DNA replication preinitiation complex"/>
    <property type="evidence" value="ECO:0000314"/>
    <property type="project" value="PomBase"/>
</dbReference>
<dbReference type="GO" id="GO:0072686">
    <property type="term" value="C:mitotic spindle"/>
    <property type="evidence" value="ECO:0007005"/>
    <property type="project" value="PomBase"/>
</dbReference>
<dbReference type="GO" id="GO:0044732">
    <property type="term" value="C:mitotic spindle pole body"/>
    <property type="evidence" value="ECO:0007005"/>
    <property type="project" value="PomBase"/>
</dbReference>
<dbReference type="GO" id="GO:0005634">
    <property type="term" value="C:nucleus"/>
    <property type="evidence" value="ECO:0000314"/>
    <property type="project" value="PomBase"/>
</dbReference>
<dbReference type="GO" id="GO:0035861">
    <property type="term" value="C:site of double-strand break"/>
    <property type="evidence" value="ECO:0000314"/>
    <property type="project" value="PomBase"/>
</dbReference>
<dbReference type="GO" id="GO:0035591">
    <property type="term" value="F:signaling adaptor activity"/>
    <property type="evidence" value="ECO:0000314"/>
    <property type="project" value="PomBase"/>
</dbReference>
<dbReference type="GO" id="GO:0006270">
    <property type="term" value="P:DNA replication initiation"/>
    <property type="evidence" value="ECO:0000318"/>
    <property type="project" value="GO_Central"/>
</dbReference>
<dbReference type="GO" id="GO:0044773">
    <property type="term" value="P:mitotic DNA damage checkpoint signaling"/>
    <property type="evidence" value="ECO:0000269"/>
    <property type="project" value="PomBase"/>
</dbReference>
<dbReference type="GO" id="GO:0033314">
    <property type="term" value="P:mitotic DNA replication checkpoint signaling"/>
    <property type="evidence" value="ECO:0000315"/>
    <property type="project" value="PomBase"/>
</dbReference>
<dbReference type="GO" id="GO:0007095">
    <property type="term" value="P:mitotic G2 DNA damage checkpoint signaling"/>
    <property type="evidence" value="ECO:0000315"/>
    <property type="project" value="PomBase"/>
</dbReference>
<dbReference type="CDD" id="cd17740">
    <property type="entry name" value="BRCT_Rad4_rpt1"/>
    <property type="match status" value="1"/>
</dbReference>
<dbReference type="CDD" id="cd17746">
    <property type="entry name" value="BRCT_Rad4_rpt2"/>
    <property type="match status" value="1"/>
</dbReference>
<dbReference type="CDD" id="cd18433">
    <property type="entry name" value="BRCT_Rad4_rpt3"/>
    <property type="match status" value="1"/>
</dbReference>
<dbReference type="CDD" id="cd17723">
    <property type="entry name" value="BRCT_Rad4_rpt4"/>
    <property type="match status" value="1"/>
</dbReference>
<dbReference type="FunFam" id="3.40.50.10190:FF:000080">
    <property type="entry name" value="S-M checkpoint control protein rad4"/>
    <property type="match status" value="1"/>
</dbReference>
<dbReference type="Gene3D" id="3.40.50.10190">
    <property type="entry name" value="BRCT domain"/>
    <property type="match status" value="4"/>
</dbReference>
<dbReference type="InterPro" id="IPR001357">
    <property type="entry name" value="BRCT_dom"/>
</dbReference>
<dbReference type="InterPro" id="IPR036420">
    <property type="entry name" value="BRCT_dom_sf"/>
</dbReference>
<dbReference type="PANTHER" id="PTHR13561">
    <property type="entry name" value="DNA REPLICATION REGULATOR DPB11-RELATED"/>
    <property type="match status" value="1"/>
</dbReference>
<dbReference type="PANTHER" id="PTHR13561:SF20">
    <property type="entry name" value="DNA TOPOISOMERASE 2-BINDING PROTEIN 1"/>
    <property type="match status" value="1"/>
</dbReference>
<dbReference type="Pfam" id="PF00533">
    <property type="entry name" value="BRCT"/>
    <property type="match status" value="3"/>
</dbReference>
<dbReference type="Pfam" id="PF12738">
    <property type="entry name" value="PTCB-BRCT"/>
    <property type="match status" value="1"/>
</dbReference>
<dbReference type="SMART" id="SM00292">
    <property type="entry name" value="BRCT"/>
    <property type="match status" value="4"/>
</dbReference>
<dbReference type="SUPFAM" id="SSF52113">
    <property type="entry name" value="BRCT domain"/>
    <property type="match status" value="4"/>
</dbReference>
<dbReference type="PROSITE" id="PS50172">
    <property type="entry name" value="BRCT"/>
    <property type="match status" value="4"/>
</dbReference>
<feature type="chain" id="PRO_0000097153" description="S-M checkpoint control protein rad4">
    <location>
        <begin position="1"/>
        <end position="648"/>
    </location>
</feature>
<feature type="domain" description="BRCT 1" evidence="2">
    <location>
        <begin position="2"/>
        <end position="92"/>
    </location>
</feature>
<feature type="domain" description="BRCT 2" evidence="2">
    <location>
        <begin position="96"/>
        <end position="185"/>
    </location>
</feature>
<feature type="domain" description="BRCT 3" evidence="2">
    <location>
        <begin position="298"/>
        <end position="384"/>
    </location>
</feature>
<feature type="domain" description="BRCT 4" evidence="2">
    <location>
        <begin position="392"/>
        <end position="486"/>
    </location>
</feature>
<feature type="short sequence motif" description="Nuclear localization signal" evidence="1">
    <location>
        <begin position="242"/>
        <end position="249"/>
    </location>
</feature>
<feature type="short sequence motif" description="Nuclear localization signal" evidence="1">
    <location>
        <begin position="643"/>
        <end position="648"/>
    </location>
</feature>
<feature type="modified residue" description="Phosphoserine" evidence="5">
    <location>
        <position position="592"/>
    </location>
</feature>
<feature type="turn" evidence="11">
    <location>
        <begin position="6"/>
        <end position="9"/>
    </location>
</feature>
<feature type="strand" evidence="11">
    <location>
        <begin position="11"/>
        <end position="16"/>
    </location>
</feature>
<feature type="helix" evidence="11">
    <location>
        <begin position="19"/>
        <end position="31"/>
    </location>
</feature>
<feature type="strand" evidence="11">
    <location>
        <begin position="38"/>
        <end position="41"/>
    </location>
</feature>
<feature type="strand" evidence="11">
    <location>
        <begin position="46"/>
        <end position="50"/>
    </location>
</feature>
<feature type="strand" evidence="11">
    <location>
        <begin position="52"/>
        <end position="54"/>
    </location>
</feature>
<feature type="helix" evidence="11">
    <location>
        <begin position="55"/>
        <end position="63"/>
    </location>
</feature>
<feature type="strand" evidence="11">
    <location>
        <begin position="67"/>
        <end position="70"/>
    </location>
</feature>
<feature type="helix" evidence="11">
    <location>
        <begin position="74"/>
        <end position="83"/>
    </location>
</feature>
<feature type="turn" evidence="11">
    <location>
        <begin position="90"/>
        <end position="96"/>
    </location>
</feature>
<feature type="turn" evidence="11">
    <location>
        <begin position="101"/>
        <end position="104"/>
    </location>
</feature>
<feature type="strand" evidence="11">
    <location>
        <begin position="106"/>
        <end position="111"/>
    </location>
</feature>
<feature type="helix" evidence="11">
    <location>
        <begin position="116"/>
        <end position="126"/>
    </location>
</feature>
<feature type="strand" evidence="11">
    <location>
        <begin position="133"/>
        <end position="135"/>
    </location>
</feature>
<feature type="strand" evidence="11">
    <location>
        <begin position="141"/>
        <end position="147"/>
    </location>
</feature>
<feature type="helix" evidence="11">
    <location>
        <begin position="150"/>
        <end position="157"/>
    </location>
</feature>
<feature type="strand" evidence="11">
    <location>
        <begin position="161"/>
        <end position="163"/>
    </location>
</feature>
<feature type="helix" evidence="11">
    <location>
        <begin position="166"/>
        <end position="174"/>
    </location>
</feature>
<feature type="helix" evidence="11">
    <location>
        <begin position="180"/>
        <end position="183"/>
    </location>
</feature>
<feature type="turn" evidence="10">
    <location>
        <begin position="302"/>
        <end position="305"/>
    </location>
</feature>
<feature type="strand" evidence="10">
    <location>
        <begin position="307"/>
        <end position="310"/>
    </location>
</feature>
<feature type="helix" evidence="10">
    <location>
        <begin position="315"/>
        <end position="326"/>
    </location>
</feature>
<feature type="turn" evidence="10">
    <location>
        <begin position="327"/>
        <end position="329"/>
    </location>
</feature>
<feature type="strand" evidence="10">
    <location>
        <begin position="342"/>
        <end position="345"/>
    </location>
</feature>
<feature type="helix" evidence="10">
    <location>
        <begin position="351"/>
        <end position="353"/>
    </location>
</feature>
<feature type="strand" evidence="10">
    <location>
        <begin position="361"/>
        <end position="363"/>
    </location>
</feature>
<feature type="helix" evidence="10">
    <location>
        <begin position="364"/>
        <end position="372"/>
    </location>
</feature>
<feature type="helix" evidence="10">
    <location>
        <begin position="383"/>
        <end position="385"/>
    </location>
</feature>
<feature type="helix" evidence="10">
    <location>
        <begin position="391"/>
        <end position="393"/>
    </location>
</feature>
<feature type="helix" evidence="10">
    <location>
        <begin position="394"/>
        <end position="397"/>
    </location>
</feature>
<feature type="strand" evidence="10">
    <location>
        <begin position="401"/>
        <end position="406"/>
    </location>
</feature>
<feature type="helix" evidence="10">
    <location>
        <begin position="409"/>
        <end position="421"/>
    </location>
</feature>
<feature type="strand" evidence="10">
    <location>
        <begin position="425"/>
        <end position="429"/>
    </location>
</feature>
<feature type="strand" evidence="10">
    <location>
        <begin position="435"/>
        <end position="439"/>
    </location>
</feature>
<feature type="helix" evidence="10">
    <location>
        <begin position="447"/>
        <end position="458"/>
    </location>
</feature>
<feature type="strand" evidence="10">
    <location>
        <begin position="462"/>
        <end position="465"/>
    </location>
</feature>
<feature type="helix" evidence="10">
    <location>
        <begin position="467"/>
        <end position="475"/>
    </location>
</feature>
<feature type="helix" evidence="10">
    <location>
        <begin position="483"/>
        <end position="485"/>
    </location>
</feature>
<accession>P32372</accession>
<name>RAD4_SCHPO</name>
<organism>
    <name type="scientific">Schizosaccharomyces pombe (strain 972 / ATCC 24843)</name>
    <name type="common">Fission yeast</name>
    <dbReference type="NCBI Taxonomy" id="284812"/>
    <lineage>
        <taxon>Eukaryota</taxon>
        <taxon>Fungi</taxon>
        <taxon>Dikarya</taxon>
        <taxon>Ascomycota</taxon>
        <taxon>Taphrinomycotina</taxon>
        <taxon>Schizosaccharomycetes</taxon>
        <taxon>Schizosaccharomycetales</taxon>
        <taxon>Schizosaccharomycetaceae</taxon>
        <taxon>Schizosaccharomyces</taxon>
    </lineage>
</organism>
<keyword id="KW-0002">3D-structure</keyword>
<keyword id="KW-0235">DNA replication</keyword>
<keyword id="KW-0539">Nucleus</keyword>
<keyword id="KW-0597">Phosphoprotein</keyword>
<keyword id="KW-1185">Reference proteome</keyword>
<keyword id="KW-0677">Repeat</keyword>
<sequence>MGSSKPLKGFVICCTSIDLKQRTEISTKATKLGAAYRSDFTKDVTHLIAGDFDTPKYKFAAKSRPDIKIMSSEWIPVLYESWVQGEDLDDGLLVDKHFLPTLFKCRVCLTNIGQPERSRIENYVLKHGGTFCPDLTRDVTHLIAGTSSGRKYEYALKWKINVVCVEWLWQSIQRNAVLEPQYFQLDMPAEKIGLGAYVRLDPNTTEAKSYSENQKISKNKEKSGQSLAALAEEADLEPVIMKRGKKRDRSILWEELNNGKFEFSSRSEENSVLLDDFTPETVQPLEENELDTELNIENEAKLFKNLTFYLYEFPNTKVSRLHKCLSDNGGQISEFLSSTIDFVVIPHYFPVDELPIFSFPTVNEWWIERCLYYKKIFGIDEHALAKPFFRPSLVPYFNGLSIHLTGFKGEELSHLKKALTILGAVVHEFLGVQRSILLVNTNEPFSMKTRFKIQHATEWNVRVVGVAWLWNIIQSGKFIDQVSPWAIDKKENQEIKKFTNQNNMVFPTSDRDTRLQNSLAQQPIGHSTPHNSPSLLSVKKRQNNHIRSNTLIQLNSNSKDSTIFPRRSVTVPGDKIDTVWKSSVTKPETPTSPQEHVSYIDPDAQREKHKLYAQLTSNVDAIPPANDLQNQENGLLLITESHRKLRRR</sequence>
<evidence type="ECO:0000255" key="1"/>
<evidence type="ECO:0000255" key="2">
    <source>
        <dbReference type="PROSITE-ProRule" id="PRU00033"/>
    </source>
</evidence>
<evidence type="ECO:0000269" key="3">
    <source>
    </source>
</evidence>
<evidence type="ECO:0000269" key="4">
    <source>
    </source>
</evidence>
<evidence type="ECO:0000269" key="5">
    <source>
    </source>
</evidence>
<evidence type="ECO:0000269" key="6">
    <source>
    </source>
</evidence>
<evidence type="ECO:0000269" key="7">
    <source>
    </source>
</evidence>
<evidence type="ECO:0000269" key="8">
    <source>
    </source>
</evidence>
<evidence type="ECO:0000269" key="9">
    <source>
    </source>
</evidence>
<evidence type="ECO:0007829" key="10">
    <source>
        <dbReference type="PDB" id="4BMD"/>
    </source>
</evidence>
<evidence type="ECO:0007829" key="11">
    <source>
        <dbReference type="PDB" id="4BU0"/>
    </source>
</evidence>
<gene>
    <name type="primary">rad4</name>
    <name type="synonym">cut5</name>
    <name type="ORF">SPAC23C4.18c</name>
</gene>
<reference key="1">
    <citation type="journal article" date="1993" name="Cell">
        <title>Fission yeast cut5+, required for S phase onset and M phase restraint, is identical to the radiation-damage repair gene rad4+.</title>
        <authorList>
            <person name="Saka Y."/>
            <person name="Yanagida M."/>
        </authorList>
    </citation>
    <scope>NUCLEOTIDE SEQUENCE [GENOMIC DNA]</scope>
    <scope>FUNCTION</scope>
</reference>
<reference key="2">
    <citation type="journal article" date="2002" name="Nature">
        <title>The genome sequence of Schizosaccharomyces pombe.</title>
        <authorList>
            <person name="Wood V."/>
            <person name="Gwilliam R."/>
            <person name="Rajandream M.A."/>
            <person name="Lyne M.H."/>
            <person name="Lyne R."/>
            <person name="Stewart A."/>
            <person name="Sgouros J.G."/>
            <person name="Peat N."/>
            <person name="Hayles J."/>
            <person name="Baker S.G."/>
            <person name="Basham D."/>
            <person name="Bowman S."/>
            <person name="Brooks K."/>
            <person name="Brown D."/>
            <person name="Brown S."/>
            <person name="Chillingworth T."/>
            <person name="Churcher C.M."/>
            <person name="Collins M."/>
            <person name="Connor R."/>
            <person name="Cronin A."/>
            <person name="Davis P."/>
            <person name="Feltwell T."/>
            <person name="Fraser A."/>
            <person name="Gentles S."/>
            <person name="Goble A."/>
            <person name="Hamlin N."/>
            <person name="Harris D.E."/>
            <person name="Hidalgo J."/>
            <person name="Hodgson G."/>
            <person name="Holroyd S."/>
            <person name="Hornsby T."/>
            <person name="Howarth S."/>
            <person name="Huckle E.J."/>
            <person name="Hunt S."/>
            <person name="Jagels K."/>
            <person name="James K.D."/>
            <person name="Jones L."/>
            <person name="Jones M."/>
            <person name="Leather S."/>
            <person name="McDonald S."/>
            <person name="McLean J."/>
            <person name="Mooney P."/>
            <person name="Moule S."/>
            <person name="Mungall K.L."/>
            <person name="Murphy L.D."/>
            <person name="Niblett D."/>
            <person name="Odell C."/>
            <person name="Oliver K."/>
            <person name="O'Neil S."/>
            <person name="Pearson D."/>
            <person name="Quail M.A."/>
            <person name="Rabbinowitsch E."/>
            <person name="Rutherford K.M."/>
            <person name="Rutter S."/>
            <person name="Saunders D."/>
            <person name="Seeger K."/>
            <person name="Sharp S."/>
            <person name="Skelton J."/>
            <person name="Simmonds M.N."/>
            <person name="Squares R."/>
            <person name="Squares S."/>
            <person name="Stevens K."/>
            <person name="Taylor K."/>
            <person name="Taylor R.G."/>
            <person name="Tivey A."/>
            <person name="Walsh S.V."/>
            <person name="Warren T."/>
            <person name="Whitehead S."/>
            <person name="Woodward J.R."/>
            <person name="Volckaert G."/>
            <person name="Aert R."/>
            <person name="Robben J."/>
            <person name="Grymonprez B."/>
            <person name="Weltjens I."/>
            <person name="Vanstreels E."/>
            <person name="Rieger M."/>
            <person name="Schaefer M."/>
            <person name="Mueller-Auer S."/>
            <person name="Gabel C."/>
            <person name="Fuchs M."/>
            <person name="Duesterhoeft A."/>
            <person name="Fritzc C."/>
            <person name="Holzer E."/>
            <person name="Moestl D."/>
            <person name="Hilbert H."/>
            <person name="Borzym K."/>
            <person name="Langer I."/>
            <person name="Beck A."/>
            <person name="Lehrach H."/>
            <person name="Reinhardt R."/>
            <person name="Pohl T.M."/>
            <person name="Eger P."/>
            <person name="Zimmermann W."/>
            <person name="Wedler H."/>
            <person name="Wambutt R."/>
            <person name="Purnelle B."/>
            <person name="Goffeau A."/>
            <person name="Cadieu E."/>
            <person name="Dreano S."/>
            <person name="Gloux S."/>
            <person name="Lelaure V."/>
            <person name="Mottier S."/>
            <person name="Galibert F."/>
            <person name="Aves S.J."/>
            <person name="Xiang Z."/>
            <person name="Hunt C."/>
            <person name="Moore K."/>
            <person name="Hurst S.M."/>
            <person name="Lucas M."/>
            <person name="Rochet M."/>
            <person name="Gaillardin C."/>
            <person name="Tallada V.A."/>
            <person name="Garzon A."/>
            <person name="Thode G."/>
            <person name="Daga R.R."/>
            <person name="Cruzado L."/>
            <person name="Jimenez J."/>
            <person name="Sanchez M."/>
            <person name="del Rey F."/>
            <person name="Benito J."/>
            <person name="Dominguez A."/>
            <person name="Revuelta J.L."/>
            <person name="Moreno S."/>
            <person name="Armstrong J."/>
            <person name="Forsburg S.L."/>
            <person name="Cerutti L."/>
            <person name="Lowe T."/>
            <person name="McCombie W.R."/>
            <person name="Paulsen I."/>
            <person name="Potashkin J."/>
            <person name="Shpakovski G.V."/>
            <person name="Ussery D."/>
            <person name="Barrell B.G."/>
            <person name="Nurse P."/>
        </authorList>
    </citation>
    <scope>NUCLEOTIDE SEQUENCE [LARGE SCALE GENOMIC DNA]</scope>
    <source>
        <strain>972 / ATCC 24843</strain>
    </source>
</reference>
<reference key="3">
    <citation type="journal article" date="1991" name="Nucleic Acids Res.">
        <title>Cloning and characterization of the rad4 gene of Schizosaccharomyces pombe; a gene showing short regions of sequence similarity to the human XRCC1 gene.</title>
        <authorList>
            <person name="Fenech M."/>
            <person name="Carr A.M."/>
            <person name="Murray J."/>
            <person name="Watts F.Z."/>
            <person name="Lehmann A.R."/>
        </authorList>
    </citation>
    <scope>NUCLEOTIDE SEQUENCE [GENOMIC DNA] OF 70-648</scope>
</reference>
<reference key="4">
    <citation type="journal article" date="1993" name="Nucleic Acids Res.">
        <title>Duplicated region of sequence similarity to the human XRCC1 DNA repair gene in the Schizosaccharomyces pombe rad4/cut5 gene.</title>
        <authorList>
            <person name="Lehmann A.R."/>
        </authorList>
    </citation>
    <scope>SEQUENCE REVISION</scope>
    <scope>SIMILARITY</scope>
</reference>
<reference key="5">
    <citation type="journal article" date="1994" name="EMBO J.">
        <title>Fission yeast cut5 links nuclear chromatin and M phase regulator in the replication checkpoint control.</title>
        <authorList>
            <person name="Saka Y."/>
            <person name="Fantes P."/>
            <person name="Sutani T."/>
            <person name="McInerny C."/>
            <person name="Creanor J."/>
            <person name="Yanagida M."/>
        </authorList>
    </citation>
    <scope>FUNCTION</scope>
</reference>
<reference key="6">
    <citation type="journal article" date="1997" name="Genes Dev.">
        <title>Damage and replication checkpoint control in fission yeast is ensured by interactions of Crb2, a protein with BRCT motif, with Cut5 and Chk1.</title>
        <authorList>
            <person name="Saka Y."/>
            <person name="Esashi F."/>
            <person name="Matsusaka T."/>
            <person name="Mochida S."/>
            <person name="Yanagida M."/>
        </authorList>
    </citation>
    <scope>INTERACTION WITH CRB2</scope>
    <source>
        <strain>972 / ATCC 24843</strain>
    </source>
</reference>
<reference key="7">
    <citation type="journal article" date="2002" name="Curr. Biol.">
        <title>CDK phosphorylation of Drc1 regulates DNA replication in fission yeast.</title>
        <authorList>
            <person name="Noguchi E."/>
            <person name="Shanahan P."/>
            <person name="Noguchi C."/>
            <person name="Russell P."/>
        </authorList>
    </citation>
    <scope>INTERACTION WITH DRC1</scope>
</reference>
<reference key="8">
    <citation type="journal article" date="2004" name="EMBO J.">
        <title>Regulation of checkpoint kinases through dynamic interaction with Crb2.</title>
        <authorList>
            <person name="Mochida S."/>
            <person name="Esashi F."/>
            <person name="Aono N."/>
            <person name="Tamai K."/>
            <person name="O'Connell M.J."/>
            <person name="Yanagida M."/>
        </authorList>
    </citation>
    <scope>INTERACTION WITH CRB2</scope>
</reference>
<reference key="9">
    <citation type="journal article" date="2008" name="J. Proteome Res.">
        <title>Phosphoproteome analysis of fission yeast.</title>
        <authorList>
            <person name="Wilson-Grady J.T."/>
            <person name="Villen J."/>
            <person name="Gygi S.P."/>
        </authorList>
    </citation>
    <scope>PHOSPHORYLATION [LARGE SCALE ANALYSIS] AT SER-592</scope>
    <scope>IDENTIFICATION BY MASS SPECTROMETRY</scope>
</reference>
<reference key="10">
    <citation type="journal article" date="2013" name="Mol. Cell">
        <title>Phosphorylation-dependent assembly and coordination of the DNA damage checkpoint apparatus by Rad4(TopBP1).</title>
        <authorList>
            <person name="Qu M."/>
            <person name="Rappas M."/>
            <person name="Wardlaw C.P."/>
            <person name="Garcia V."/>
            <person name="Ren J.Y."/>
            <person name="Day M."/>
            <person name="Carr A.M."/>
            <person name="Oliver A.W."/>
            <person name="Du L.L."/>
            <person name="Pearl L.H."/>
        </authorList>
    </citation>
    <scope>X-RAY CRYSTALLOGRAPHY (1.50 ANGSTROMS) OF 1-186 AND 291-494</scope>
    <scope>FUNCTION</scope>
    <scope>INTERACTION WITH CRB2</scope>
</reference>